<name>SASA_SYNE7</name>
<proteinExistence type="evidence at protein level"/>
<dbReference type="EC" id="2.7.13.3" evidence="2 18 19"/>
<dbReference type="EMBL" id="D14056">
    <property type="protein sequence ID" value="BAA03145.1"/>
    <property type="molecule type" value="Genomic_DNA"/>
</dbReference>
<dbReference type="EMBL" id="CP000100">
    <property type="protein sequence ID" value="ABB58144.1"/>
    <property type="molecule type" value="Genomic_DNA"/>
</dbReference>
<dbReference type="PIR" id="JN0793">
    <property type="entry name" value="JN0793"/>
</dbReference>
<dbReference type="RefSeq" id="WP_011378322.1">
    <property type="nucleotide sequence ID" value="NZ_JACJTX010000001.1"/>
</dbReference>
<dbReference type="PDB" id="1T4Y">
    <property type="method" value="NMR"/>
    <property type="chains" value="A=4-103"/>
</dbReference>
<dbReference type="PDB" id="1T4Z">
    <property type="method" value="NMR"/>
    <property type="chains" value="A=4-103"/>
</dbReference>
<dbReference type="PDBsum" id="1T4Y"/>
<dbReference type="PDBsum" id="1T4Z"/>
<dbReference type="BMRB" id="Q06904"/>
<dbReference type="SMR" id="Q06904"/>
<dbReference type="IntAct" id="Q06904">
    <property type="interactions" value="3"/>
</dbReference>
<dbReference type="STRING" id="1140.Synpcc7942_2114"/>
<dbReference type="PaxDb" id="1140-Synpcc7942_2114"/>
<dbReference type="GeneID" id="72430990"/>
<dbReference type="KEGG" id="syf:Synpcc7942_2114"/>
<dbReference type="eggNOG" id="COG2205">
    <property type="taxonomic scope" value="Bacteria"/>
</dbReference>
<dbReference type="HOGENOM" id="CLU_723030_0_0_3"/>
<dbReference type="OrthoDB" id="9773956at2"/>
<dbReference type="BioCyc" id="SYNEL:SYNPCC7942_2114-MONOMER"/>
<dbReference type="EvolutionaryTrace" id="Q06904"/>
<dbReference type="Proteomes" id="UP000889800">
    <property type="component" value="Chromosome"/>
</dbReference>
<dbReference type="GO" id="GO:0005524">
    <property type="term" value="F:ATP binding"/>
    <property type="evidence" value="ECO:0007669"/>
    <property type="project" value="UniProtKB-KW"/>
</dbReference>
<dbReference type="GO" id="GO:0000155">
    <property type="term" value="F:phosphorelay sensor kinase activity"/>
    <property type="evidence" value="ECO:0000315"/>
    <property type="project" value="CACAO"/>
</dbReference>
<dbReference type="GO" id="GO:0097167">
    <property type="term" value="P:circadian regulation of translation"/>
    <property type="evidence" value="ECO:0000315"/>
    <property type="project" value="UniProtKB"/>
</dbReference>
<dbReference type="GO" id="GO:0007623">
    <property type="term" value="P:circadian rhythm"/>
    <property type="evidence" value="ECO:0000315"/>
    <property type="project" value="UniProtKB"/>
</dbReference>
<dbReference type="CDD" id="cd00082">
    <property type="entry name" value="HisKA"/>
    <property type="match status" value="1"/>
</dbReference>
<dbReference type="CDD" id="cd02978">
    <property type="entry name" value="KaiB_like"/>
    <property type="match status" value="1"/>
</dbReference>
<dbReference type="FunFam" id="1.10.287.130:FF:000154">
    <property type="entry name" value="Adaptive-response sensory kinase"/>
    <property type="match status" value="1"/>
</dbReference>
<dbReference type="FunFam" id="3.40.30.10:FF:000673">
    <property type="entry name" value="Adaptive-response sensory-kinase SasA"/>
    <property type="match status" value="1"/>
</dbReference>
<dbReference type="FunFam" id="3.30.565.10:FF:000006">
    <property type="entry name" value="Sensor histidine kinase WalK"/>
    <property type="match status" value="1"/>
</dbReference>
<dbReference type="Gene3D" id="1.10.287.130">
    <property type="match status" value="1"/>
</dbReference>
<dbReference type="Gene3D" id="3.40.30.10">
    <property type="entry name" value="Glutaredoxin"/>
    <property type="match status" value="1"/>
</dbReference>
<dbReference type="Gene3D" id="3.30.565.10">
    <property type="entry name" value="Histidine kinase-like ATPase, C-terminal domain"/>
    <property type="match status" value="1"/>
</dbReference>
<dbReference type="HAMAP" id="MF_01837">
    <property type="entry name" value="Kinase_SasA"/>
    <property type="match status" value="1"/>
</dbReference>
<dbReference type="InterPro" id="IPR036890">
    <property type="entry name" value="HATPase_C_sf"/>
</dbReference>
<dbReference type="InterPro" id="IPR005467">
    <property type="entry name" value="His_kinase_dom"/>
</dbReference>
<dbReference type="InterPro" id="IPR003661">
    <property type="entry name" value="HisK_dim/P_dom"/>
</dbReference>
<dbReference type="InterPro" id="IPR036097">
    <property type="entry name" value="HisK_dim/P_sf"/>
</dbReference>
<dbReference type="InterPro" id="IPR011649">
    <property type="entry name" value="KaiB_domain"/>
</dbReference>
<dbReference type="InterPro" id="IPR023527">
    <property type="entry name" value="Kinase_SasA"/>
</dbReference>
<dbReference type="InterPro" id="IPR004358">
    <property type="entry name" value="Sig_transdc_His_kin-like_C"/>
</dbReference>
<dbReference type="InterPro" id="IPR036249">
    <property type="entry name" value="Thioredoxin-like_sf"/>
</dbReference>
<dbReference type="NCBIfam" id="NF006800">
    <property type="entry name" value="PRK09303.1"/>
    <property type="match status" value="1"/>
</dbReference>
<dbReference type="PANTHER" id="PTHR43547:SF2">
    <property type="entry name" value="HYBRID SIGNAL TRANSDUCTION HISTIDINE KINASE C"/>
    <property type="match status" value="1"/>
</dbReference>
<dbReference type="PANTHER" id="PTHR43547">
    <property type="entry name" value="TWO-COMPONENT HISTIDINE KINASE"/>
    <property type="match status" value="1"/>
</dbReference>
<dbReference type="Pfam" id="PF02518">
    <property type="entry name" value="HATPase_c"/>
    <property type="match status" value="1"/>
</dbReference>
<dbReference type="Pfam" id="PF00512">
    <property type="entry name" value="HisKA"/>
    <property type="match status" value="1"/>
</dbReference>
<dbReference type="Pfam" id="PF07689">
    <property type="entry name" value="KaiB"/>
    <property type="match status" value="1"/>
</dbReference>
<dbReference type="PRINTS" id="PR00344">
    <property type="entry name" value="BCTRLSENSOR"/>
</dbReference>
<dbReference type="SMART" id="SM00387">
    <property type="entry name" value="HATPase_c"/>
    <property type="match status" value="1"/>
</dbReference>
<dbReference type="SMART" id="SM00388">
    <property type="entry name" value="HisKA"/>
    <property type="match status" value="1"/>
</dbReference>
<dbReference type="SMART" id="SM01248">
    <property type="entry name" value="KaiB"/>
    <property type="match status" value="1"/>
</dbReference>
<dbReference type="SUPFAM" id="SSF55874">
    <property type="entry name" value="ATPase domain of HSP90 chaperone/DNA topoisomerase II/histidine kinase"/>
    <property type="match status" value="1"/>
</dbReference>
<dbReference type="SUPFAM" id="SSF47384">
    <property type="entry name" value="Homodimeric domain of signal transducing histidine kinase"/>
    <property type="match status" value="1"/>
</dbReference>
<dbReference type="SUPFAM" id="SSF52833">
    <property type="entry name" value="Thioredoxin-like"/>
    <property type="match status" value="1"/>
</dbReference>
<dbReference type="PROSITE" id="PS50109">
    <property type="entry name" value="HIS_KIN"/>
    <property type="match status" value="1"/>
</dbReference>
<protein>
    <recommendedName>
        <fullName evidence="2 16">Adaptive-response sensory kinase SasA</fullName>
        <ecNumber evidence="2 18 19">2.7.13.3</ecNumber>
    </recommendedName>
    <alternativeName>
        <fullName evidence="2 15">Sensor histidine kinase SasA</fullName>
    </alternativeName>
    <alternativeName>
        <fullName evidence="16">Synechococcus adaptive sensor protein A</fullName>
        <shortName evidence="16">SasA</shortName>
    </alternativeName>
</protein>
<sequence length="387" mass="43315">MGESLSPQALAQPLLLQLFVDTRPLSQHIVQRVKNILAAVEATVPISLQVINVADQPQLVEYYRLVVTPALVKIGPGSRQVLSGIDLTDQLANQLPQWLVQQEAFFADREPPEVNIPFTELGQPETPALQQADAFFQLQQQYADLSERTKFLEQVIALVAHDLRNPLTAALLAVDTIQIRSQSFSVATAKEMQGLCSLFDQARSQLREIERMIAEILEATRHSGESLRINPREVVFEPLLQQVLEQLHERWRSKQQQLITDVPGDLPTLYADPDRLRQVLVNLLDNAIKYTPPGGTITIAALHRTSQKVQISISDTGSGIPRDQLSVIFKNLVRLSRDSSQEGYGIGLSVCQRIVQAHFGRIWVASELGQGSTFHFTMPVYRYTMPC</sequence>
<reference evidence="21" key="1">
    <citation type="journal article" date="1993" name="Gene">
        <title>Cloning of a sensory-kinase-encoding gene that belongs to the two-component regulatory family from the cyanobacterium Synechococcus sp. PCC7942.</title>
        <authorList>
            <person name="Nagaya M."/>
            <person name="Aiba H."/>
            <person name="Mizuno T."/>
        </authorList>
    </citation>
    <scope>NUCLEOTIDE SEQUENCE [GENOMIC DNA]</scope>
    <scope>AUTOPHOSPHORYLATION</scope>
    <source>
        <strain>ATCC 33912 / PCC 7942 / FACHB-805</strain>
    </source>
</reference>
<reference evidence="20" key="2">
    <citation type="submission" date="2005-08" db="EMBL/GenBank/DDBJ databases">
        <title>Complete sequence of chromosome 1 of Synechococcus elongatus PCC 7942.</title>
        <authorList>
            <consortium name="US DOE Joint Genome Institute"/>
            <person name="Copeland A."/>
            <person name="Lucas S."/>
            <person name="Lapidus A."/>
            <person name="Barry K."/>
            <person name="Detter J.C."/>
            <person name="Glavina T."/>
            <person name="Hammon N."/>
            <person name="Israni S."/>
            <person name="Pitluck S."/>
            <person name="Schmutz J."/>
            <person name="Larimer F."/>
            <person name="Land M."/>
            <person name="Kyrpides N."/>
            <person name="Lykidis A."/>
            <person name="Golden S."/>
            <person name="Richardson P."/>
        </authorList>
    </citation>
    <scope>NUCLEOTIDE SEQUENCE [LARGE SCALE GENOMIC DNA]</scope>
    <source>
        <strain>ATCC 33912 / PCC 7942 / FACHB-805</strain>
    </source>
</reference>
<reference key="3">
    <citation type="journal article" date="2000" name="Cell">
        <title>A kaiC-interacting sensory histidine kinase, SasA, necessary to sustain robust circadian oscillation in cyanobacteria.</title>
        <authorList>
            <person name="Iwasaki H."/>
            <person name="Williams S.B."/>
            <person name="Kitayama Y."/>
            <person name="Ishiura M."/>
            <person name="Golden S.S."/>
            <person name="Kondo T."/>
        </authorList>
    </citation>
    <scope>FUNCTION</scope>
    <scope>INTERACTION WITH KAIC</scope>
    <scope>SUBUNIT</scope>
    <scope>INDUCTION</scope>
    <scope>DISRUPTION PHENOTYPE</scope>
    <scope>MUTAGENESIS OF HIS-161</scope>
    <source>
        <strain>ATCC 33912 / PCC 7942 / FACHB-805</strain>
    </source>
</reference>
<reference key="4">
    <citation type="journal article" date="2004" name="Proc. Natl. Acad. Sci. U.S.A.">
        <title>Role of KaiC phosphorylation in the circadian clock system of Synechococcus elongatus PCC 7942.</title>
        <authorList>
            <person name="Nishiwaki T."/>
            <person name="Satomi Y."/>
            <person name="Nakajima M."/>
            <person name="Lee C."/>
            <person name="Kiyohara R."/>
            <person name="Kageyama H."/>
            <person name="Kitayama Y."/>
            <person name="Temamoto M."/>
            <person name="Yamaguchi A."/>
            <person name="Hijikata A."/>
            <person name="Go M."/>
            <person name="Iwasaki H."/>
            <person name="Takao T."/>
            <person name="Kondo T."/>
        </authorList>
    </citation>
    <scope>SUBUNIT</scope>
    <source>
        <strain>ATCC 33912 / PCC 7942 / FACHB-805</strain>
    </source>
</reference>
<reference key="5">
    <citation type="journal article" date="2005" name="EMBO J.">
        <title>LdpA: a component of the circadian clock senses redox state of the cell.</title>
        <authorList>
            <person name="Ivleva N.B."/>
            <person name="Bramlett M.R."/>
            <person name="Lindahl P.A."/>
            <person name="Golden S.S."/>
        </authorList>
    </citation>
    <scope>INTERACTION WITH LDPA</scope>
    <scope>SUBUNIT</scope>
    <source>
        <strain>ATCC 33912 / PCC 7942 / FACHB-805</strain>
    </source>
</reference>
<reference key="6">
    <citation type="journal article" date="2006" name="Proc. Natl. Acad. Sci. U.S.A.">
        <title>Circadian rhythms in gene transcription imparted by chromosome compaction in the cyanobacterium Synechococcus elongatus.</title>
        <authorList>
            <person name="Smith R.M."/>
            <person name="Williams S.B."/>
        </authorList>
    </citation>
    <scope>AUTOPHOSPHORYLATION</scope>
    <scope>DISRUPTION PHENOTYPE</scope>
    <source>
        <strain>ATCC 33912 / PCC 7942 / FACHB-805</strain>
    </source>
</reference>
<reference key="7">
    <citation type="journal article" date="2006" name="Proc. Natl. Acad. Sci. U.S.A.">
        <title>A KaiC-associating SasA-RpaA two-component regulatory system as a major circadian timing mediator in cyanobacteria.</title>
        <authorList>
            <person name="Takai N."/>
            <person name="Nakajima M."/>
            <person name="Oyama T."/>
            <person name="Kito R."/>
            <person name="Sugita C."/>
            <person name="Sugita M."/>
            <person name="Kondo T."/>
            <person name="Iwasaki H."/>
        </authorList>
    </citation>
    <scope>FUNCTION</scope>
    <scope>CATALYTIC ACTIVITY</scope>
    <scope>AUTOPHOSPHORYLATION</scope>
    <scope>DISRUPTION PHENOTYPE</scope>
    <source>
        <strain>ATCC 33912 / PCC 7942 / FACHB-805</strain>
    </source>
</reference>
<reference key="8">
    <citation type="journal article" date="2010" name="Proc. Natl. Acad. Sci. U.S.A.">
        <title>Three major output pathways from the KaiABC-based oscillator cooperate to generate robust circadian kaiBC expression in cyanobacteria.</title>
        <authorList>
            <person name="Taniguchi Y."/>
            <person name="Takai N."/>
            <person name="Katayama M."/>
            <person name="Kondo T."/>
            <person name="Oyama T."/>
        </authorList>
    </citation>
    <scope>FUNCTION IN OUTPUT PATHWAY</scope>
    <scope>DISRUPTION PHENOTYPE</scope>
    <source>
        <strain>ATCC 33912 / PCC 7942 / FACHB-805</strain>
    </source>
</reference>
<reference key="9">
    <citation type="journal article" date="2012" name="Genes Cells">
        <title>Phase-dependent generation and transmission of time information by the KaiABC circadian clock oscillator through SasA-KaiC interaction in cyanobacteria.</title>
        <authorList>
            <person name="Valencia S.J."/>
            <person name="Bitou K."/>
            <person name="Ishii K."/>
            <person name="Murakami R."/>
            <person name="Morishita M."/>
            <person name="Onai K."/>
            <person name="Furukawa Y."/>
            <person name="Imada K."/>
            <person name="Namba K."/>
            <person name="Ishiura M."/>
        </authorList>
    </citation>
    <scope>FUNCTION</scope>
    <scope>DISRUPTION PHENOTYPE</scope>
    <scope>MUTAGENESIS OF HIS-161</scope>
    <source>
        <strain>ATCC 33912 / PCC 7942 / FACHB-805</strain>
    </source>
</reference>
<reference key="10">
    <citation type="journal article" date="2013" name="Mol. Cell">
        <title>Two antagonistic clock-regulated histidine kinases time the activation of circadian gene expression.</title>
        <authorList>
            <person name="Gutu A."/>
            <person name="O'Shea E.K."/>
        </authorList>
    </citation>
    <scope>FUNCTION</scope>
    <scope>DISRUPTION PHENOTYPE</scope>
    <source>
        <strain>ATCC 33912 / PCC 7942 / FACHB-805</strain>
    </source>
</reference>
<reference key="11">
    <citation type="journal article" date="2015" name="Science">
        <title>Circadian rhythms. A protein fold switch joins the circadian oscillator to clock output in cyanobacteria.</title>
        <authorList>
            <person name="Chang Y.G."/>
            <person name="Cohen S.E."/>
            <person name="Phong C."/>
            <person name="Myers W.K."/>
            <person name="Kim Y.I."/>
            <person name="Tseng R."/>
            <person name="Lin J."/>
            <person name="Zhang L."/>
            <person name="Boyd J.S."/>
            <person name="Lee Y."/>
            <person name="Kang S."/>
            <person name="Lee D."/>
            <person name="Li S."/>
            <person name="Britt R.D."/>
            <person name="Rust M.J."/>
            <person name="Golden S.S."/>
            <person name="LiWang A."/>
        </authorList>
    </citation>
    <scope>FUNCTION</scope>
    <scope>SUBUNIT</scope>
    <source>
        <strain>ATCC 33912 / PCC 7942 / FACHB-805</strain>
    </source>
</reference>
<reference key="12">
    <citation type="journal article" date="2017" name="Science">
        <title>Structural basis of the day-night transition in a bacterial circadian clock.</title>
        <authorList>
            <person name="Tseng R."/>
            <person name="Goularte N.F."/>
            <person name="Chavan A."/>
            <person name="Luu J."/>
            <person name="Cohen S.E."/>
            <person name="Chang Y.G."/>
            <person name="Heisler J."/>
            <person name="Li S."/>
            <person name="Michael A.K."/>
            <person name="Tripathi S."/>
            <person name="Golden S.S."/>
            <person name="LiWang A."/>
            <person name="Partch C.L."/>
        </authorList>
    </citation>
    <scope>FUNCTION</scope>
    <scope>SUBUNIT</scope>
    <source>
        <strain>ATCC 33912 / PCC 7942 / FACHB-805</strain>
    </source>
</reference>
<reference key="13">
    <citation type="journal article" date="2021" name="Science">
        <title>Reconstitution of an intact clock reveals mechanisms of circadian timekeeping.</title>
        <authorList>
            <person name="Chavan A.G."/>
            <person name="Swan J.A."/>
            <person name="Heisler J."/>
            <person name="Sancar C."/>
            <person name="Ernst D.C."/>
            <person name="Fang M."/>
            <person name="Palacios J.G."/>
            <person name="Spangler R.K."/>
            <person name="Bagshaw C.R."/>
            <person name="Tripathi S."/>
            <person name="Crosby P."/>
            <person name="Golden S.S."/>
            <person name="Partch C.L."/>
            <person name="LiWang A."/>
        </authorList>
    </citation>
    <scope>CLOCK RECONSTITUTION</scope>
    <scope>FUNCTION</scope>
    <scope>CATALYTIC ACTIVITY</scope>
    <scope>SUBUNIT</scope>
    <scope>MUTAGENESIS OF HIS-28; GLN-94 AND HIS-161</scope>
    <source>
        <strain>ATCC 33912 / PCC 7942 / FACHB-805</strain>
    </source>
</reference>
<reference evidence="22 23" key="14">
    <citation type="journal article" date="2004" name="J. Mol. Biol.">
        <title>Structure of the N-terminal domain of the circadian clock-associated histidine kinase SasA.</title>
        <authorList>
            <person name="Vakonakis I."/>
            <person name="Klewer D.A."/>
            <person name="Williams S.B."/>
            <person name="Golden S.S."/>
            <person name="LiWang A.C."/>
        </authorList>
    </citation>
    <scope>STRUCTURE BY NMR OF 4-103</scope>
    <source>
        <strain>ATCC 33912 / PCC 7942 / FACHB-805</strain>
    </source>
</reference>
<evidence type="ECO:0000250" key="1">
    <source>
        <dbReference type="UniProtKB" id="Q8DMT2"/>
    </source>
</evidence>
<evidence type="ECO:0000255" key="2">
    <source>
        <dbReference type="HAMAP-Rule" id="MF_01837"/>
    </source>
</evidence>
<evidence type="ECO:0000269" key="3">
    <source>
    </source>
</evidence>
<evidence type="ECO:0000269" key="4">
    <source>
    </source>
</evidence>
<evidence type="ECO:0000269" key="5">
    <source>
    </source>
</evidence>
<evidence type="ECO:0000269" key="6">
    <source>
    </source>
</evidence>
<evidence type="ECO:0000269" key="7">
    <source>
    </source>
</evidence>
<evidence type="ECO:0000269" key="8">
    <source>
    </source>
</evidence>
<evidence type="ECO:0000269" key="9">
    <source>
    </source>
</evidence>
<evidence type="ECO:0000269" key="10">
    <source>
    </source>
</evidence>
<evidence type="ECO:0000269" key="11">
    <source>
    </source>
</evidence>
<evidence type="ECO:0000269" key="12">
    <source>
    </source>
</evidence>
<evidence type="ECO:0000269" key="13">
    <source>
    </source>
</evidence>
<evidence type="ECO:0000269" key="14">
    <source>
    </source>
</evidence>
<evidence type="ECO:0000303" key="15">
    <source>
    </source>
</evidence>
<evidence type="ECO:0000303" key="16">
    <source>
    </source>
</evidence>
<evidence type="ECO:0000305" key="17"/>
<evidence type="ECO:0000305" key="18">
    <source>
    </source>
</evidence>
<evidence type="ECO:0000305" key="19">
    <source>
    </source>
</evidence>
<evidence type="ECO:0000312" key="20">
    <source>
        <dbReference type="EMBL" id="ABB58144.1"/>
    </source>
</evidence>
<evidence type="ECO:0000312" key="21">
    <source>
        <dbReference type="EMBL" id="BAA03145.1"/>
    </source>
</evidence>
<evidence type="ECO:0007744" key="22">
    <source>
        <dbReference type="PDB" id="1T4Y"/>
    </source>
</evidence>
<evidence type="ECO:0007744" key="23">
    <source>
        <dbReference type="PDB" id="1T4Z"/>
    </source>
</evidence>
<evidence type="ECO:0007829" key="24">
    <source>
        <dbReference type="PDB" id="1T4Y"/>
    </source>
</evidence>
<organism>
    <name type="scientific">Synechococcus elongatus (strain ATCC 33912 / PCC 7942 / FACHB-805)</name>
    <name type="common">Anacystis nidulans R2</name>
    <dbReference type="NCBI Taxonomy" id="1140"/>
    <lineage>
        <taxon>Bacteria</taxon>
        <taxon>Bacillati</taxon>
        <taxon>Cyanobacteriota</taxon>
        <taxon>Cyanophyceae</taxon>
        <taxon>Synechococcales</taxon>
        <taxon>Synechococcaceae</taxon>
        <taxon>Synechococcus</taxon>
    </lineage>
</organism>
<accession>Q06904</accession>
<accession>Q31LC5</accession>
<feature type="chain" id="PRO_0000074872" description="Adaptive-response sensory kinase SasA">
    <location>
        <begin position="1"/>
        <end position="387"/>
    </location>
</feature>
<feature type="domain" description="Histidine kinase" evidence="2">
    <location>
        <begin position="158"/>
        <end position="382"/>
    </location>
</feature>
<feature type="region of interest" description="Interacts with KaiC" evidence="3">
    <location>
        <begin position="1"/>
        <end position="97"/>
    </location>
</feature>
<feature type="modified residue" description="Phosphohistidine; by autocatalysis" evidence="2">
    <location>
        <position position="161"/>
    </location>
</feature>
<feature type="mutagenesis site" description="Decreases KaiB-KaiC complex cooperativity. More severe decrease; when associated with A-94, double mutant binds KaiC and phosphorylates RpaA." evidence="13">
    <original>H</original>
    <variation>A</variation>
    <location>
        <position position="28"/>
    </location>
</feature>
<feature type="mutagenesis site" description="Decreases KaiB-KaiC complex cooperativity. More severe decrease; when associated with A-28, double mutant binds KaiC and phosphorylates RpaA." evidence="13">
    <original>Q</original>
    <variation>A</variation>
    <location>
        <position position="94"/>
    </location>
</feature>
<feature type="mutagenesis site" description="No change in stimulation of KaiB-KaiC complex cooperativity, probably catalytically inactive. Period length increases by 2 hours, impaired growth in light/dark cycle at 30 and 42 umol/m(2)/sec photons." evidence="9 13">
    <original>H</original>
    <variation>A</variation>
    <location>
        <position position="161"/>
    </location>
</feature>
<feature type="mutagenesis site" description="Period length increases by 2 hours, impaired growth in light/dark cycle at 30 and 42 umol/m(2)/sec photons." evidence="9">
    <original>H</original>
    <variation>D</variation>
    <variation>E</variation>
    <location>
        <position position="161"/>
    </location>
</feature>
<feature type="mutagenesis site" description="Lowers the amplitude of circadian rhythm, similar to disruption." evidence="3">
    <original>H</original>
    <variation>Q</variation>
    <location>
        <position position="161"/>
    </location>
</feature>
<feature type="sequence conflict" description="In Ref. 1; BAA03145." evidence="17" ref="1">
    <original>F</original>
    <variation>L</variation>
    <location>
        <position position="135"/>
    </location>
</feature>
<feature type="strand" evidence="24">
    <location>
        <begin position="14"/>
        <end position="20"/>
    </location>
</feature>
<feature type="helix" evidence="24">
    <location>
        <begin position="24"/>
        <end position="40"/>
    </location>
</feature>
<feature type="strand" evidence="24">
    <location>
        <begin position="46"/>
        <end position="52"/>
    </location>
</feature>
<feature type="turn" evidence="24">
    <location>
        <begin position="53"/>
        <end position="55"/>
    </location>
</feature>
<feature type="helix" evidence="24">
    <location>
        <begin position="57"/>
        <end position="62"/>
    </location>
</feature>
<feature type="strand" evidence="24">
    <location>
        <begin position="67"/>
        <end position="78"/>
    </location>
</feature>
<feature type="strand" evidence="24">
    <location>
        <begin position="80"/>
        <end position="85"/>
    </location>
</feature>
<feature type="helix" evidence="24">
    <location>
        <begin position="87"/>
        <end position="99"/>
    </location>
</feature>
<keyword id="KW-0002">3D-structure</keyword>
<keyword id="KW-0067">ATP-binding</keyword>
<keyword id="KW-0090">Biological rhythms</keyword>
<keyword id="KW-0418">Kinase</keyword>
<keyword id="KW-0547">Nucleotide-binding</keyword>
<keyword id="KW-0597">Phosphoprotein</keyword>
<keyword id="KW-1185">Reference proteome</keyword>
<keyword id="KW-0808">Transferase</keyword>
<keyword id="KW-0902">Two-component regulatory system</keyword>
<comment type="function">
    <text evidence="3 6 7 8 10 11 13">Member of the two-component regulatory system SasA/RpaA involved in genome-wide circadian gene expression (PubMed:16882723). One of three clock output pathways. Participates in the KaiABC clock protein complex, which constitutes the main circadian regulator in cyanobacteria, via its interaction with KaiC. Required for robustness of the circadian rhythm of gene expression and involved in clock output (PubMed:10786837, PubMed:20133618, PubMed:34618577). KaiC enhances the autophosphorylation activity of SasA, which then transfers its phosphate group to RpaA to activate it. Phosphotransfer is maximal when KaiC phosphorylation is active during the circadian cycle; this two-component system is activated by fully phosphorylated KaiC (PubMed:16707582, PubMed:16882723, PubMed:23541768, PubMed:26113641, PubMed:34618577). A very robust clock is reconstituted with KaiA, KaiB, KaiC, SasA, CikA and RpaA; output is measured by transcription from an appropriate reporter (PubMed:34618577). In addition to its output function, recruits fold-shifted KaiB (KaiB(fs)) to KaiC to cooperatively form the KaiB(6):KaiC(6) complex (independent of SasA kinase activity); at physiological concentrations increases their association. At higher concentrations SasA and KaiB(fs) compete to bind to KaiC. Mutations that decrease cooperativity nearly phenocopy a deletion mutation (PubMed:34618577).</text>
</comment>
<comment type="function">
    <text evidence="9">Autophosphorylation and phosphotransfer activities are not essential for clock rhythms in continuous light, but they are essential for adaptation to light/dark cycles.</text>
</comment>
<comment type="catalytic activity">
    <reaction evidence="2 18 19">
        <text>ATP + protein L-histidine = ADP + protein N-phospho-L-histidine.</text>
        <dbReference type="EC" id="2.7.13.3"/>
    </reaction>
</comment>
<comment type="subunit">
    <text evidence="1 3 4 5 11 12 13">Homooligomerizes (By similarity). Part of the circadian clock (KaiA, KaiB, KaiC, CikA, RpaA, SasA), the composition of which varies during the circadian cycle (PubMed:10786837, PubMed:15347812, PubMed:26113641, PubMed:28302851, PubMed:34618577). Binds to the CI domain of KaiC; KaiB(fs) and SasA compete for the binding site (PubMed:10786837, PubMed:15347812, PubMed:26113641, PubMed:28302851, PubMed:34618577). Binds preferentially to doubly phosphorylated KaiC (PubMed:34618577). Interacts with LdpA (PubMed:15775978).</text>
</comment>
<comment type="interaction">
    <interactant intactId="EBI-626872">
        <id>Q06904</id>
    </interactant>
    <interactant intactId="EBI-592287">
        <id>Q79PF4</id>
        <label>kaiC</label>
    </interactant>
    <organismsDiffer>false</organismsDiffer>
    <experiments>6</experiments>
</comment>
<comment type="induction">
    <text evidence="3">Transcribed in a circadian pattern, protein accumulates in light (at protein level).</text>
</comment>
<comment type="domain">
    <text evidence="2">The N-terminus interacts with KaiC, while the C-terminal histidine kinase domain autophosphorylates and is probably responsible for self-oligomerization. The N-terminal domain stimulates the C-terminus to autophosphorylate.</text>
</comment>
<comment type="PTM">
    <text evidence="7 14">Autophosphorylates in vitro.</text>
</comment>
<comment type="disruption phenotype">
    <text evidence="3 6 7 8 9 10">No growth phenotype in low, continuous light, dysregulation of expression of many genes. In a light/dark regime cells grow very slowly (PubMed:10786837, PubMed:20133618, PubMed:22512339). At medium light lowers kaiA and kaiBC expression, attenuating but not destroying circadian rhythms and affecting the expression of many genes (clock output) (PubMed:10786837, PubMed:20133618). Chromosome compaction remains rhythmic (PubMed:16707582). Loss of circadian control of gene expression; KaiA protein levels are unaffected, KaiC is constitutively phosphorylated (PubMed:16882723). Phospho-RpaA is barely detected (PubMed:23541768).</text>
</comment>
<gene>
    <name evidence="2 15" type="primary">sasA</name>
    <name evidence="16" type="synonym">sarS</name>
    <name type="ordered locus">Synpcc7942_2114</name>
</gene>